<proteinExistence type="inferred from homology"/>
<feature type="chain" id="PRO_0000312009" description="UPF0509 protein YciZ">
    <location>
        <begin position="1"/>
        <end position="57"/>
    </location>
</feature>
<gene>
    <name evidence="1" type="primary">yciZ</name>
    <name type="ordered locus">c1755</name>
</gene>
<name>YCIZ_ECOL6</name>
<accession>Q8FHT8</accession>
<sequence length="57" mass="6441">MSEFDAQRVAERIDIVLDILVAGDYHSAIHNLEILKAELLRQVAESTPDIPKAPWEI</sequence>
<protein>
    <recommendedName>
        <fullName evidence="1">UPF0509 protein YciZ</fullName>
    </recommendedName>
</protein>
<dbReference type="EMBL" id="AE014075">
    <property type="protein sequence ID" value="AAN80221.1"/>
    <property type="molecule type" value="Genomic_DNA"/>
</dbReference>
<dbReference type="RefSeq" id="WP_001288368.1">
    <property type="nucleotide sequence ID" value="NZ_CP051263.1"/>
</dbReference>
<dbReference type="SMR" id="Q8FHT8"/>
<dbReference type="STRING" id="199310.c1755"/>
<dbReference type="GeneID" id="93775408"/>
<dbReference type="KEGG" id="ecc:c1755"/>
<dbReference type="eggNOG" id="ENOG5032YBK">
    <property type="taxonomic scope" value="Bacteria"/>
</dbReference>
<dbReference type="HOGENOM" id="CLU_180697_1_0_6"/>
<dbReference type="BioCyc" id="ECOL199310:C1755-MONOMER"/>
<dbReference type="Proteomes" id="UP000001410">
    <property type="component" value="Chromosome"/>
</dbReference>
<dbReference type="HAMAP" id="MF_01641">
    <property type="entry name" value="UPF0509"/>
    <property type="match status" value="1"/>
</dbReference>
<dbReference type="InterPro" id="IPR020887">
    <property type="entry name" value="UPF0509"/>
</dbReference>
<dbReference type="NCBIfam" id="NF010179">
    <property type="entry name" value="PRK13658.1"/>
    <property type="match status" value="1"/>
</dbReference>
<dbReference type="Pfam" id="PF23675">
    <property type="entry name" value="YciZ"/>
    <property type="match status" value="1"/>
</dbReference>
<keyword id="KW-1185">Reference proteome</keyword>
<organism>
    <name type="scientific">Escherichia coli O6:H1 (strain CFT073 / ATCC 700928 / UPEC)</name>
    <dbReference type="NCBI Taxonomy" id="199310"/>
    <lineage>
        <taxon>Bacteria</taxon>
        <taxon>Pseudomonadati</taxon>
        <taxon>Pseudomonadota</taxon>
        <taxon>Gammaproteobacteria</taxon>
        <taxon>Enterobacterales</taxon>
        <taxon>Enterobacteriaceae</taxon>
        <taxon>Escherichia</taxon>
    </lineage>
</organism>
<comment type="similarity">
    <text evidence="1">Belongs to the UPF0509 family.</text>
</comment>
<evidence type="ECO:0000255" key="1">
    <source>
        <dbReference type="HAMAP-Rule" id="MF_01641"/>
    </source>
</evidence>
<reference key="1">
    <citation type="journal article" date="2002" name="Proc. Natl. Acad. Sci. U.S.A.">
        <title>Extensive mosaic structure revealed by the complete genome sequence of uropathogenic Escherichia coli.</title>
        <authorList>
            <person name="Welch R.A."/>
            <person name="Burland V."/>
            <person name="Plunkett G. III"/>
            <person name="Redford P."/>
            <person name="Roesch P."/>
            <person name="Rasko D."/>
            <person name="Buckles E.L."/>
            <person name="Liou S.-R."/>
            <person name="Boutin A."/>
            <person name="Hackett J."/>
            <person name="Stroud D."/>
            <person name="Mayhew G.F."/>
            <person name="Rose D.J."/>
            <person name="Zhou S."/>
            <person name="Schwartz D.C."/>
            <person name="Perna N.T."/>
            <person name="Mobley H.L.T."/>
            <person name="Donnenberg M.S."/>
            <person name="Blattner F.R."/>
        </authorList>
    </citation>
    <scope>NUCLEOTIDE SEQUENCE [LARGE SCALE GENOMIC DNA]</scope>
    <source>
        <strain>CFT073 / ATCC 700928 / UPEC</strain>
    </source>
</reference>